<comment type="function">
    <text evidence="1">Catalyzes the condensation of iminoaspartate with dihydroxyacetone phosphate to form quinolinate.</text>
</comment>
<comment type="catalytic activity">
    <reaction evidence="1">
        <text>iminosuccinate + dihydroxyacetone phosphate = quinolinate + phosphate + 2 H2O + H(+)</text>
        <dbReference type="Rhea" id="RHEA:25888"/>
        <dbReference type="ChEBI" id="CHEBI:15377"/>
        <dbReference type="ChEBI" id="CHEBI:15378"/>
        <dbReference type="ChEBI" id="CHEBI:29959"/>
        <dbReference type="ChEBI" id="CHEBI:43474"/>
        <dbReference type="ChEBI" id="CHEBI:57642"/>
        <dbReference type="ChEBI" id="CHEBI:77875"/>
        <dbReference type="EC" id="2.5.1.72"/>
    </reaction>
    <physiologicalReaction direction="left-to-right" evidence="1">
        <dbReference type="Rhea" id="RHEA:25889"/>
    </physiologicalReaction>
</comment>
<comment type="cofactor">
    <cofactor evidence="1">
        <name>[4Fe-4S] cluster</name>
        <dbReference type="ChEBI" id="CHEBI:49883"/>
    </cofactor>
    <text evidence="1">Binds 1 [4Fe-4S] cluster per subunit.</text>
</comment>
<comment type="pathway">
    <text evidence="1">Cofactor biosynthesis; NAD(+) biosynthesis; quinolinate from iminoaspartate: step 1/1.</text>
</comment>
<comment type="subcellular location">
    <subcellularLocation>
        <location evidence="1">Cytoplasm</location>
    </subcellularLocation>
</comment>
<comment type="similarity">
    <text evidence="1">Belongs to the quinolinate synthase family. Type 3 subfamily.</text>
</comment>
<proteinExistence type="inferred from homology"/>
<dbReference type="EC" id="2.5.1.72" evidence="1"/>
<dbReference type="EMBL" id="CP001472">
    <property type="protein sequence ID" value="ACO34396.1"/>
    <property type="molecule type" value="Genomic_DNA"/>
</dbReference>
<dbReference type="SMR" id="C1F557"/>
<dbReference type="FunCoup" id="C1F557">
    <property type="interactions" value="460"/>
</dbReference>
<dbReference type="STRING" id="240015.ACP_3145"/>
<dbReference type="KEGG" id="aca:ACP_3145"/>
<dbReference type="eggNOG" id="COG0379">
    <property type="taxonomic scope" value="Bacteria"/>
</dbReference>
<dbReference type="HOGENOM" id="CLU_047382_2_0_0"/>
<dbReference type="InParanoid" id="C1F557"/>
<dbReference type="OrthoDB" id="9801204at2"/>
<dbReference type="UniPathway" id="UPA00253">
    <property type="reaction ID" value="UER00327"/>
</dbReference>
<dbReference type="Proteomes" id="UP000002207">
    <property type="component" value="Chromosome"/>
</dbReference>
<dbReference type="GO" id="GO:0005829">
    <property type="term" value="C:cytosol"/>
    <property type="evidence" value="ECO:0007669"/>
    <property type="project" value="TreeGrafter"/>
</dbReference>
<dbReference type="GO" id="GO:0051539">
    <property type="term" value="F:4 iron, 4 sulfur cluster binding"/>
    <property type="evidence" value="ECO:0007669"/>
    <property type="project" value="UniProtKB-KW"/>
</dbReference>
<dbReference type="GO" id="GO:0046872">
    <property type="term" value="F:metal ion binding"/>
    <property type="evidence" value="ECO:0007669"/>
    <property type="project" value="UniProtKB-KW"/>
</dbReference>
<dbReference type="GO" id="GO:0008987">
    <property type="term" value="F:quinolinate synthetase A activity"/>
    <property type="evidence" value="ECO:0007669"/>
    <property type="project" value="UniProtKB-UniRule"/>
</dbReference>
<dbReference type="GO" id="GO:0034628">
    <property type="term" value="P:'de novo' NAD biosynthetic process from L-aspartate"/>
    <property type="evidence" value="ECO:0007669"/>
    <property type="project" value="TreeGrafter"/>
</dbReference>
<dbReference type="Gene3D" id="3.40.50.10800">
    <property type="entry name" value="NadA-like"/>
    <property type="match status" value="3"/>
</dbReference>
<dbReference type="HAMAP" id="MF_00569">
    <property type="entry name" value="NadA_type3"/>
    <property type="match status" value="1"/>
</dbReference>
<dbReference type="InterPro" id="IPR003473">
    <property type="entry name" value="NadA"/>
</dbReference>
<dbReference type="InterPro" id="IPR036094">
    <property type="entry name" value="NadA_sf"/>
</dbReference>
<dbReference type="InterPro" id="IPR023515">
    <property type="entry name" value="Quinolinate_synth_A_type3"/>
</dbReference>
<dbReference type="NCBIfam" id="TIGR00550">
    <property type="entry name" value="nadA"/>
    <property type="match status" value="1"/>
</dbReference>
<dbReference type="NCBIfam" id="NF006883">
    <property type="entry name" value="PRK09375.2-4"/>
    <property type="match status" value="1"/>
</dbReference>
<dbReference type="PANTHER" id="PTHR30573:SF0">
    <property type="entry name" value="QUINOLINATE SYNTHASE, CHLOROPLASTIC"/>
    <property type="match status" value="1"/>
</dbReference>
<dbReference type="PANTHER" id="PTHR30573">
    <property type="entry name" value="QUINOLINATE SYNTHETASE A"/>
    <property type="match status" value="1"/>
</dbReference>
<dbReference type="Pfam" id="PF02445">
    <property type="entry name" value="NadA"/>
    <property type="match status" value="1"/>
</dbReference>
<dbReference type="SUPFAM" id="SSF142754">
    <property type="entry name" value="NadA-like"/>
    <property type="match status" value="1"/>
</dbReference>
<feature type="chain" id="PRO_1000146819" description="Quinolinate synthase">
    <location>
        <begin position="1"/>
        <end position="373"/>
    </location>
</feature>
<feature type="binding site" evidence="1">
    <location>
        <position position="46"/>
    </location>
    <ligand>
        <name>iminosuccinate</name>
        <dbReference type="ChEBI" id="CHEBI:77875"/>
    </ligand>
</feature>
<feature type="binding site" evidence="1">
    <location>
        <position position="63"/>
    </location>
    <ligand>
        <name>iminosuccinate</name>
        <dbReference type="ChEBI" id="CHEBI:77875"/>
    </ligand>
</feature>
<feature type="binding site" evidence="1">
    <location>
        <position position="109"/>
    </location>
    <ligand>
        <name>[4Fe-4S] cluster</name>
        <dbReference type="ChEBI" id="CHEBI:49883"/>
    </ligand>
</feature>
<feature type="binding site" evidence="1">
    <location>
        <begin position="142"/>
        <end position="144"/>
    </location>
    <ligand>
        <name>iminosuccinate</name>
        <dbReference type="ChEBI" id="CHEBI:77875"/>
    </ligand>
</feature>
<feature type="binding site" evidence="1">
    <location>
        <position position="163"/>
    </location>
    <ligand>
        <name>iminosuccinate</name>
        <dbReference type="ChEBI" id="CHEBI:77875"/>
    </ligand>
</feature>
<feature type="binding site" evidence="1">
    <location>
        <position position="232"/>
    </location>
    <ligand>
        <name>[4Fe-4S] cluster</name>
        <dbReference type="ChEBI" id="CHEBI:49883"/>
    </ligand>
</feature>
<feature type="binding site" evidence="1">
    <location>
        <begin position="258"/>
        <end position="260"/>
    </location>
    <ligand>
        <name>iminosuccinate</name>
        <dbReference type="ChEBI" id="CHEBI:77875"/>
    </ligand>
</feature>
<feature type="binding site" evidence="1">
    <location>
        <position position="275"/>
    </location>
    <ligand>
        <name>iminosuccinate</name>
        <dbReference type="ChEBI" id="CHEBI:77875"/>
    </ligand>
</feature>
<feature type="binding site" evidence="1">
    <location>
        <position position="324"/>
    </location>
    <ligand>
        <name>[4Fe-4S] cluster</name>
        <dbReference type="ChEBI" id="CHEBI:49883"/>
    </ligand>
</feature>
<protein>
    <recommendedName>
        <fullName evidence="1">Quinolinate synthase</fullName>
        <ecNumber evidence="1">2.5.1.72</ecNumber>
    </recommendedName>
</protein>
<evidence type="ECO:0000255" key="1">
    <source>
        <dbReference type="HAMAP-Rule" id="MF_00569"/>
    </source>
</evidence>
<accession>C1F557</accession>
<reference key="1">
    <citation type="journal article" date="2009" name="Appl. Environ. Microbiol.">
        <title>Three genomes from the phylum Acidobacteria provide insight into the lifestyles of these microorganisms in soils.</title>
        <authorList>
            <person name="Ward N.L."/>
            <person name="Challacombe J.F."/>
            <person name="Janssen P.H."/>
            <person name="Henrissat B."/>
            <person name="Coutinho P.M."/>
            <person name="Wu M."/>
            <person name="Xie G."/>
            <person name="Haft D.H."/>
            <person name="Sait M."/>
            <person name="Badger J."/>
            <person name="Barabote R.D."/>
            <person name="Bradley B."/>
            <person name="Brettin T.S."/>
            <person name="Brinkac L.M."/>
            <person name="Bruce D."/>
            <person name="Creasy T."/>
            <person name="Daugherty S.C."/>
            <person name="Davidsen T.M."/>
            <person name="DeBoy R.T."/>
            <person name="Detter J.C."/>
            <person name="Dodson R.J."/>
            <person name="Durkin A.S."/>
            <person name="Ganapathy A."/>
            <person name="Gwinn-Giglio M."/>
            <person name="Han C.S."/>
            <person name="Khouri H."/>
            <person name="Kiss H."/>
            <person name="Kothari S.P."/>
            <person name="Madupu R."/>
            <person name="Nelson K.E."/>
            <person name="Nelson W.C."/>
            <person name="Paulsen I."/>
            <person name="Penn K."/>
            <person name="Ren Q."/>
            <person name="Rosovitz M.J."/>
            <person name="Selengut J.D."/>
            <person name="Shrivastava S."/>
            <person name="Sullivan S.A."/>
            <person name="Tapia R."/>
            <person name="Thompson L.S."/>
            <person name="Watkins K.L."/>
            <person name="Yang Q."/>
            <person name="Yu C."/>
            <person name="Zafar N."/>
            <person name="Zhou L."/>
            <person name="Kuske C.R."/>
        </authorList>
    </citation>
    <scope>NUCLEOTIDE SEQUENCE [LARGE SCALE GENOMIC DNA]</scope>
    <source>
        <strain>ATCC 51196 / DSM 11244 / BCRC 80197 / JCM 7670 / NBRC 15755 / NCIMB 13165 / 161</strain>
    </source>
</reference>
<organism>
    <name type="scientific">Acidobacterium capsulatum (strain ATCC 51196 / DSM 11244 / BCRC 80197 / JCM 7670 / NBRC 15755 / NCIMB 13165 / 161)</name>
    <dbReference type="NCBI Taxonomy" id="240015"/>
    <lineage>
        <taxon>Bacteria</taxon>
        <taxon>Pseudomonadati</taxon>
        <taxon>Acidobacteriota</taxon>
        <taxon>Terriglobia</taxon>
        <taxon>Terriglobales</taxon>
        <taxon>Acidobacteriaceae</taxon>
        <taxon>Acidobacterium</taxon>
    </lineage>
</organism>
<sequence length="373" mass="41218">MEVASAVAEPDACSLDHYLSLPDHSMDERIAAARARLGASTVLLGHHYQRDEVVRFADFTGDSYKLSKIAAETEAKYVVFCGVHFMAESADVLGRSEQHVILPDLNAGCSMADMAEISQVEACWETLLGAGLGAEQVMPLTYMNSTAAIKAFCGERGGLVCTSSNARKAFEWAFARAEKILFLPDQHLGRNTAFAMGIGLDEMVVFDPWQIGGGVPAEKLRAAKVILWKGHCSVHQRFLPEHVDRVRAKYEGIRVVVHPECRWEVCQKADALGSTERIIAEVEEAPEGTMFAIGTEIHLVNRLAKRFAPLGKKIITLDDTGCLCTTMYRISPQHLAWALENLLEGRVVNQIKVTDEVKHWARVALDRMLEIRG</sequence>
<name>NADA_ACIC5</name>
<keyword id="KW-0004">4Fe-4S</keyword>
<keyword id="KW-0963">Cytoplasm</keyword>
<keyword id="KW-0408">Iron</keyword>
<keyword id="KW-0411">Iron-sulfur</keyword>
<keyword id="KW-0479">Metal-binding</keyword>
<keyword id="KW-0662">Pyridine nucleotide biosynthesis</keyword>
<keyword id="KW-1185">Reference proteome</keyword>
<keyword id="KW-0808">Transferase</keyword>
<gene>
    <name evidence="1" type="primary">nadA</name>
    <name type="ordered locus">ACP_3145</name>
</gene>